<evidence type="ECO:0000250" key="1"/>
<evidence type="ECO:0000250" key="2">
    <source>
        <dbReference type="UniProtKB" id="Q9UBK5"/>
    </source>
</evidence>
<evidence type="ECO:0000255" key="3"/>
<evidence type="ECO:0000269" key="4">
    <source>
    </source>
</evidence>
<evidence type="ECO:0000269" key="5">
    <source>
    </source>
</evidence>
<evidence type="ECO:0000269" key="6">
    <source>
    </source>
</evidence>
<evidence type="ECO:0000269" key="7">
    <source>
    </source>
</evidence>
<evidence type="ECO:0000269" key="8">
    <source>
    </source>
</evidence>
<evidence type="ECO:0000269" key="9">
    <source>
    </source>
</evidence>
<evidence type="ECO:0000269" key="10">
    <source>
    </source>
</evidence>
<evidence type="ECO:0000269" key="11">
    <source>
    </source>
</evidence>
<evidence type="ECO:0000269" key="12">
    <source>
    </source>
</evidence>
<evidence type="ECO:0000269" key="13">
    <source>
    </source>
</evidence>
<evidence type="ECO:0000303" key="14">
    <source>
    </source>
</evidence>
<evidence type="ECO:0000303" key="15">
    <source>
    </source>
</evidence>
<evidence type="ECO:0000305" key="16"/>
<dbReference type="EMBL" id="AF172930">
    <property type="protein sequence ID" value="AAD50294.1"/>
    <property type="molecule type" value="mRNA"/>
</dbReference>
<dbReference type="EMBL" id="AF072846">
    <property type="protein sequence ID" value="AAD46988.1"/>
    <property type="molecule type" value="mRNA"/>
</dbReference>
<dbReference type="EMBL" id="AF122905">
    <property type="protein sequence ID" value="AAD47912.1"/>
    <property type="molecule type" value="mRNA"/>
</dbReference>
<dbReference type="EMBL" id="AF358138">
    <property type="protein sequence ID" value="AAK52752.1"/>
    <property type="molecule type" value="Genomic_DNA"/>
</dbReference>
<dbReference type="EMBL" id="AK008005">
    <property type="protein sequence ID" value="BAB25404.1"/>
    <property type="molecule type" value="mRNA"/>
</dbReference>
<dbReference type="EMBL" id="BC069220">
    <property type="protein sequence ID" value="AAH69220.1"/>
    <property type="molecule type" value="mRNA"/>
</dbReference>
<dbReference type="EMBL" id="BC145824">
    <property type="protein sequence ID" value="AAI45825.1"/>
    <property type="molecule type" value="mRNA"/>
</dbReference>
<dbReference type="EMBL" id="BC145826">
    <property type="protein sequence ID" value="AAI45827.1"/>
    <property type="molecule type" value="mRNA"/>
</dbReference>
<dbReference type="CCDS" id="CCDS39882.1">
    <molecule id="Q9QUJ0-1"/>
</dbReference>
<dbReference type="RefSeq" id="NP_035957.2">
    <molecule id="Q9QUJ0-1"/>
    <property type="nucleotide sequence ID" value="NM_011827.3"/>
</dbReference>
<dbReference type="SMR" id="Q9QUJ0"/>
<dbReference type="BioGRID" id="204784">
    <property type="interactions" value="3"/>
</dbReference>
<dbReference type="CORUM" id="Q9QUJ0"/>
<dbReference type="DIP" id="DIP-48776N"/>
<dbReference type="FunCoup" id="Q9QUJ0">
    <property type="interactions" value="137"/>
</dbReference>
<dbReference type="IntAct" id="Q9QUJ0">
    <property type="interactions" value="2"/>
</dbReference>
<dbReference type="STRING" id="10090.ENSMUSP00000074573"/>
<dbReference type="iPTMnet" id="Q9QUJ0"/>
<dbReference type="PhosphoSitePlus" id="Q9QUJ0"/>
<dbReference type="PaxDb" id="10090-ENSMUSP00000074573"/>
<dbReference type="ProteomicsDB" id="269725">
    <molecule id="Q9QUJ0-1"/>
</dbReference>
<dbReference type="ProteomicsDB" id="269726">
    <molecule id="Q9QUJ0-2"/>
</dbReference>
<dbReference type="Antibodypedia" id="29605">
    <property type="antibodies" value="155 antibodies from 21 providers"/>
</dbReference>
<dbReference type="DNASU" id="23900"/>
<dbReference type="Ensembl" id="ENSMUST00000075062.5">
    <molecule id="Q9QUJ0-1"/>
    <property type="protein sequence ID" value="ENSMUSP00000074573.4"/>
    <property type="gene ID" value="ENSMUSG00000064109.9"/>
</dbReference>
<dbReference type="Ensembl" id="ENSMUST00000208740.2">
    <molecule id="Q9QUJ0-2"/>
    <property type="protein sequence ID" value="ENSMUSP00000146793.2"/>
    <property type="gene ID" value="ENSMUSG00000064109.9"/>
</dbReference>
<dbReference type="GeneID" id="23900"/>
<dbReference type="KEGG" id="mmu:23900"/>
<dbReference type="UCSC" id="uc009geg.1">
    <molecule id="Q9QUJ0-1"/>
    <property type="organism name" value="mouse"/>
</dbReference>
<dbReference type="UCSC" id="uc009geh.1">
    <molecule id="Q9QUJ0-2"/>
    <property type="organism name" value="mouse"/>
</dbReference>
<dbReference type="AGR" id="MGI:1344360"/>
<dbReference type="CTD" id="10870"/>
<dbReference type="MGI" id="MGI:1344360">
    <property type="gene designation" value="Hcst"/>
</dbReference>
<dbReference type="VEuPathDB" id="HostDB:ENSMUSG00000064109"/>
<dbReference type="eggNOG" id="ENOG502TKP3">
    <property type="taxonomic scope" value="Eukaryota"/>
</dbReference>
<dbReference type="GeneTree" id="ENSGT00390000012777"/>
<dbReference type="HOGENOM" id="CLU_196934_0_0_1"/>
<dbReference type="InParanoid" id="Q9QUJ0"/>
<dbReference type="OMA" id="AQMTPGE"/>
<dbReference type="OrthoDB" id="8670797at2759"/>
<dbReference type="PhylomeDB" id="Q9QUJ0"/>
<dbReference type="TreeFam" id="TF338335"/>
<dbReference type="Reactome" id="R-MMU-198933">
    <property type="pathway name" value="Immunoregulatory interactions between a Lymphoid and a non-Lymphoid cell"/>
</dbReference>
<dbReference type="BioGRID-ORCS" id="23900">
    <property type="hits" value="1 hit in 75 CRISPR screens"/>
</dbReference>
<dbReference type="ChiTaRS" id="Hcst">
    <property type="organism name" value="mouse"/>
</dbReference>
<dbReference type="PRO" id="PR:Q9QUJ0"/>
<dbReference type="Proteomes" id="UP000000589">
    <property type="component" value="Chromosome 7"/>
</dbReference>
<dbReference type="RNAct" id="Q9QUJ0">
    <property type="molecule type" value="protein"/>
</dbReference>
<dbReference type="Bgee" id="ENSMUSG00000064109">
    <property type="expression patterns" value="Expressed in granulocyte and 70 other cell types or tissues"/>
</dbReference>
<dbReference type="GO" id="GO:0009986">
    <property type="term" value="C:cell surface"/>
    <property type="evidence" value="ECO:0000250"/>
    <property type="project" value="UniProtKB"/>
</dbReference>
<dbReference type="GO" id="GO:0016020">
    <property type="term" value="C:membrane"/>
    <property type="evidence" value="ECO:0000250"/>
    <property type="project" value="MGI"/>
</dbReference>
<dbReference type="GO" id="GO:0005886">
    <property type="term" value="C:plasma membrane"/>
    <property type="evidence" value="ECO:0007669"/>
    <property type="project" value="Ensembl"/>
</dbReference>
<dbReference type="GO" id="GO:0043548">
    <property type="term" value="F:phosphatidylinositol 3-kinase binding"/>
    <property type="evidence" value="ECO:0007669"/>
    <property type="project" value="Ensembl"/>
</dbReference>
<dbReference type="GO" id="GO:0030674">
    <property type="term" value="F:protein-macromolecule adaptor activity"/>
    <property type="evidence" value="ECO:0007669"/>
    <property type="project" value="Ensembl"/>
</dbReference>
<dbReference type="GO" id="GO:0005102">
    <property type="term" value="F:signaling receptor binding"/>
    <property type="evidence" value="ECO:0007669"/>
    <property type="project" value="Ensembl"/>
</dbReference>
<dbReference type="GO" id="GO:0042267">
    <property type="term" value="P:natural killer cell mediated cytotoxicity"/>
    <property type="evidence" value="ECO:0007669"/>
    <property type="project" value="Ensembl"/>
</dbReference>
<dbReference type="GO" id="GO:0051897">
    <property type="term" value="P:positive regulation of phosphatidylinositol 3-kinase/protein kinase B signal transduction"/>
    <property type="evidence" value="ECO:0007669"/>
    <property type="project" value="Ensembl"/>
</dbReference>
<dbReference type="GO" id="GO:0050776">
    <property type="term" value="P:regulation of immune response"/>
    <property type="evidence" value="ECO:0007669"/>
    <property type="project" value="InterPro"/>
</dbReference>
<dbReference type="InterPro" id="IPR009861">
    <property type="entry name" value="HCST"/>
</dbReference>
<dbReference type="PANTHER" id="PTHR21409">
    <property type="entry name" value="HEMATOPOIETIC CELL SIGNAL TRANSDUCER"/>
    <property type="match status" value="1"/>
</dbReference>
<dbReference type="PANTHER" id="PTHR21409:SF1">
    <property type="entry name" value="HEMATOPOIETIC CELL SIGNAL TRANSDUCER"/>
    <property type="match status" value="1"/>
</dbReference>
<dbReference type="Pfam" id="PF07213">
    <property type="entry name" value="DAP10"/>
    <property type="match status" value="1"/>
</dbReference>
<proteinExistence type="evidence at protein level"/>
<sequence length="79" mass="8114">MDPPGYLLFLLLLPVAASQTSAGSCSGCGTLSLPLLAGLVAADAVMSLLIVGVVFVCMRPHGRPAQEDGRVYINMPGRG</sequence>
<gene>
    <name type="primary">Hcst</name>
    <name type="synonym">Dap10</name>
    <name type="synonym">Kap10</name>
</gene>
<feature type="signal peptide" evidence="3">
    <location>
        <begin position="1"/>
        <end position="17"/>
    </location>
</feature>
<feature type="chain" id="PRO_0000330290" description="Hematopoietic cell signal transducer">
    <location>
        <begin position="18"/>
        <end position="79"/>
    </location>
</feature>
<feature type="topological domain" description="Extracellular" evidence="3">
    <location>
        <begin position="18"/>
        <end position="35"/>
    </location>
</feature>
<feature type="transmembrane region" description="Helical" evidence="3">
    <location>
        <begin position="36"/>
        <end position="56"/>
    </location>
</feature>
<feature type="topological domain" description="Cytoplasmic" evidence="3">
    <location>
        <begin position="57"/>
        <end position="79"/>
    </location>
</feature>
<feature type="region of interest" description="PIK3R1 binding site">
    <location>
        <begin position="72"/>
        <end position="75"/>
    </location>
</feature>
<feature type="region of interest" description="GRB2 binding site">
    <location>
        <begin position="72"/>
        <end position="74"/>
    </location>
</feature>
<feature type="modified residue" description="Phosphotyrosine" evidence="2">
    <location>
        <position position="72"/>
    </location>
</feature>
<feature type="splice variant" id="VSP_033023" description="In isoform 2." evidence="14 15">
    <location>
        <begin position="15"/>
        <end position="22"/>
    </location>
</feature>
<keyword id="KW-0025">Alternative splicing</keyword>
<keyword id="KW-1015">Disulfide bond</keyword>
<keyword id="KW-0325">Glycoprotein</keyword>
<keyword id="KW-0472">Membrane</keyword>
<keyword id="KW-0597">Phosphoprotein</keyword>
<keyword id="KW-1185">Reference proteome</keyword>
<keyword id="KW-0732">Signal</keyword>
<keyword id="KW-0812">Transmembrane</keyword>
<keyword id="KW-1133">Transmembrane helix</keyword>
<reference key="1">
    <citation type="journal article" date="1999" name="J. Immunol.">
        <title>KAP10, a novel transmembrane adapter protein genetically linked to DAP12 but with unique signaling properties.</title>
        <authorList>
            <person name="Chang C."/>
            <person name="Dietrich J."/>
            <person name="Harpur A.G."/>
            <person name="Lindquist J.A."/>
            <person name="Haude A."/>
            <person name="Loke Y.W."/>
            <person name="King A."/>
            <person name="Colonna M."/>
            <person name="Trowsdale J."/>
            <person name="Wilson M.J."/>
        </authorList>
    </citation>
    <scope>NUCLEOTIDE SEQUENCE [MRNA] (ISOFORM 1)</scope>
    <scope>FUNCTION</scope>
    <scope>PHOSPHORYLATION</scope>
    <scope>INTERACTION WITH PIK3R1 AND GRB2</scope>
</reference>
<reference key="2">
    <citation type="journal article" date="1999" name="Science">
        <title>An activating immunoreceptor complex formed by NKG2D and DAP10.</title>
        <authorList>
            <person name="Wu J."/>
            <person name="Song Y."/>
            <person name="Bakker A.B.H."/>
            <person name="Bauer S."/>
            <person name="Spies T."/>
            <person name="Lanier L.L."/>
            <person name="Phillips J.H."/>
        </authorList>
    </citation>
    <scope>NUCLEOTIDE SEQUENCE [MRNA] (ISOFORMS 1 AND 2)</scope>
    <source>
        <strain>C57BL/6J</strain>
    </source>
</reference>
<reference key="3">
    <citation type="journal article" date="2001" name="Immunogenetics">
        <title>The mouse Dap10 gene.</title>
        <authorList>
            <person name="Wilson M.J."/>
            <person name="Haude A."/>
            <person name="Trowsdale J."/>
        </authorList>
    </citation>
    <scope>NUCLEOTIDE SEQUENCE [GENOMIC DNA] (ISOFORM 1)</scope>
</reference>
<reference key="4">
    <citation type="journal article" date="2005" name="Science">
        <title>The transcriptional landscape of the mammalian genome.</title>
        <authorList>
            <person name="Carninci P."/>
            <person name="Kasukawa T."/>
            <person name="Katayama S."/>
            <person name="Gough J."/>
            <person name="Frith M.C."/>
            <person name="Maeda N."/>
            <person name="Oyama R."/>
            <person name="Ravasi T."/>
            <person name="Lenhard B."/>
            <person name="Wells C."/>
            <person name="Kodzius R."/>
            <person name="Shimokawa K."/>
            <person name="Bajic V.B."/>
            <person name="Brenner S.E."/>
            <person name="Batalov S."/>
            <person name="Forrest A.R."/>
            <person name="Zavolan M."/>
            <person name="Davis M.J."/>
            <person name="Wilming L.G."/>
            <person name="Aidinis V."/>
            <person name="Allen J.E."/>
            <person name="Ambesi-Impiombato A."/>
            <person name="Apweiler R."/>
            <person name="Aturaliya R.N."/>
            <person name="Bailey T.L."/>
            <person name="Bansal M."/>
            <person name="Baxter L."/>
            <person name="Beisel K.W."/>
            <person name="Bersano T."/>
            <person name="Bono H."/>
            <person name="Chalk A.M."/>
            <person name="Chiu K.P."/>
            <person name="Choudhary V."/>
            <person name="Christoffels A."/>
            <person name="Clutterbuck D.R."/>
            <person name="Crowe M.L."/>
            <person name="Dalla E."/>
            <person name="Dalrymple B.P."/>
            <person name="de Bono B."/>
            <person name="Della Gatta G."/>
            <person name="di Bernardo D."/>
            <person name="Down T."/>
            <person name="Engstrom P."/>
            <person name="Fagiolini M."/>
            <person name="Faulkner G."/>
            <person name="Fletcher C.F."/>
            <person name="Fukushima T."/>
            <person name="Furuno M."/>
            <person name="Futaki S."/>
            <person name="Gariboldi M."/>
            <person name="Georgii-Hemming P."/>
            <person name="Gingeras T.R."/>
            <person name="Gojobori T."/>
            <person name="Green R.E."/>
            <person name="Gustincich S."/>
            <person name="Harbers M."/>
            <person name="Hayashi Y."/>
            <person name="Hensch T.K."/>
            <person name="Hirokawa N."/>
            <person name="Hill D."/>
            <person name="Huminiecki L."/>
            <person name="Iacono M."/>
            <person name="Ikeo K."/>
            <person name="Iwama A."/>
            <person name="Ishikawa T."/>
            <person name="Jakt M."/>
            <person name="Kanapin A."/>
            <person name="Katoh M."/>
            <person name="Kawasawa Y."/>
            <person name="Kelso J."/>
            <person name="Kitamura H."/>
            <person name="Kitano H."/>
            <person name="Kollias G."/>
            <person name="Krishnan S.P."/>
            <person name="Kruger A."/>
            <person name="Kummerfeld S.K."/>
            <person name="Kurochkin I.V."/>
            <person name="Lareau L.F."/>
            <person name="Lazarevic D."/>
            <person name="Lipovich L."/>
            <person name="Liu J."/>
            <person name="Liuni S."/>
            <person name="McWilliam S."/>
            <person name="Madan Babu M."/>
            <person name="Madera M."/>
            <person name="Marchionni L."/>
            <person name="Matsuda H."/>
            <person name="Matsuzawa S."/>
            <person name="Miki H."/>
            <person name="Mignone F."/>
            <person name="Miyake S."/>
            <person name="Morris K."/>
            <person name="Mottagui-Tabar S."/>
            <person name="Mulder N."/>
            <person name="Nakano N."/>
            <person name="Nakauchi H."/>
            <person name="Ng P."/>
            <person name="Nilsson R."/>
            <person name="Nishiguchi S."/>
            <person name="Nishikawa S."/>
            <person name="Nori F."/>
            <person name="Ohara O."/>
            <person name="Okazaki Y."/>
            <person name="Orlando V."/>
            <person name="Pang K.C."/>
            <person name="Pavan W.J."/>
            <person name="Pavesi G."/>
            <person name="Pesole G."/>
            <person name="Petrovsky N."/>
            <person name="Piazza S."/>
            <person name="Reed J."/>
            <person name="Reid J.F."/>
            <person name="Ring B.Z."/>
            <person name="Ringwald M."/>
            <person name="Rost B."/>
            <person name="Ruan Y."/>
            <person name="Salzberg S.L."/>
            <person name="Sandelin A."/>
            <person name="Schneider C."/>
            <person name="Schoenbach C."/>
            <person name="Sekiguchi K."/>
            <person name="Semple C.A."/>
            <person name="Seno S."/>
            <person name="Sessa L."/>
            <person name="Sheng Y."/>
            <person name="Shibata Y."/>
            <person name="Shimada H."/>
            <person name="Shimada K."/>
            <person name="Silva D."/>
            <person name="Sinclair B."/>
            <person name="Sperling S."/>
            <person name="Stupka E."/>
            <person name="Sugiura K."/>
            <person name="Sultana R."/>
            <person name="Takenaka Y."/>
            <person name="Taki K."/>
            <person name="Tammoja K."/>
            <person name="Tan S.L."/>
            <person name="Tang S."/>
            <person name="Taylor M.S."/>
            <person name="Tegner J."/>
            <person name="Teichmann S.A."/>
            <person name="Ueda H.R."/>
            <person name="van Nimwegen E."/>
            <person name="Verardo R."/>
            <person name="Wei C.L."/>
            <person name="Yagi K."/>
            <person name="Yamanishi H."/>
            <person name="Zabarovsky E."/>
            <person name="Zhu S."/>
            <person name="Zimmer A."/>
            <person name="Hide W."/>
            <person name="Bult C."/>
            <person name="Grimmond S.M."/>
            <person name="Teasdale R.D."/>
            <person name="Liu E.T."/>
            <person name="Brusic V."/>
            <person name="Quackenbush J."/>
            <person name="Wahlestedt C."/>
            <person name="Mattick J.S."/>
            <person name="Hume D.A."/>
            <person name="Kai C."/>
            <person name="Sasaki D."/>
            <person name="Tomaru Y."/>
            <person name="Fukuda S."/>
            <person name="Kanamori-Katayama M."/>
            <person name="Suzuki M."/>
            <person name="Aoki J."/>
            <person name="Arakawa T."/>
            <person name="Iida J."/>
            <person name="Imamura K."/>
            <person name="Itoh M."/>
            <person name="Kato T."/>
            <person name="Kawaji H."/>
            <person name="Kawagashira N."/>
            <person name="Kawashima T."/>
            <person name="Kojima M."/>
            <person name="Kondo S."/>
            <person name="Konno H."/>
            <person name="Nakano K."/>
            <person name="Ninomiya N."/>
            <person name="Nishio T."/>
            <person name="Okada M."/>
            <person name="Plessy C."/>
            <person name="Shibata K."/>
            <person name="Shiraki T."/>
            <person name="Suzuki S."/>
            <person name="Tagami M."/>
            <person name="Waki K."/>
            <person name="Watahiki A."/>
            <person name="Okamura-Oho Y."/>
            <person name="Suzuki H."/>
            <person name="Kawai J."/>
            <person name="Hayashizaki Y."/>
        </authorList>
    </citation>
    <scope>NUCLEOTIDE SEQUENCE [LARGE SCALE MRNA] (ISOFORM 1)</scope>
    <source>
        <strain>C57BL/6J</strain>
        <tissue>Small intestine</tissue>
    </source>
</reference>
<reference key="5">
    <citation type="journal article" date="2004" name="Genome Res.">
        <title>The status, quality, and expansion of the NIH full-length cDNA project: the Mammalian Gene Collection (MGC).</title>
        <authorList>
            <consortium name="The MGC Project Team"/>
        </authorList>
    </citation>
    <scope>NUCLEOTIDE SEQUENCE [LARGE SCALE MRNA] (ISOFORMS 1 AND 2)</scope>
    <source>
        <tissue>Brain</tissue>
    </source>
</reference>
<reference key="6">
    <citation type="journal article" date="2002" name="Nat. Immunol.">
        <title>Selective associations with signaling proteins determine stimulatory versus costimulatory activity of NKG2D.</title>
        <authorList>
            <person name="Diefenbach A."/>
            <person name="Tomasello E."/>
            <person name="Lucas M."/>
            <person name="Jamieson A.M."/>
            <person name="Hsia J.K."/>
            <person name="Vivier E."/>
            <person name="Raulet D.H."/>
        </authorList>
    </citation>
    <scope>FUNCTION</scope>
    <scope>INTERACTION WITH KLRK1</scope>
</reference>
<reference key="7">
    <citation type="journal article" date="2002" name="Nat. Immunol.">
        <title>NKG2D recruits two distinct adapters to trigger NK cell activation and costimulation.</title>
        <authorList>
            <person name="Gilfillan S."/>
            <person name="Ho E.L."/>
            <person name="Cella M."/>
            <person name="Yokoyama W.M."/>
            <person name="Colonna M."/>
        </authorList>
    </citation>
    <scope>DISRUPTION PHENOTYPE</scope>
</reference>
<reference key="8">
    <citation type="journal article" date="2004" name="J. Exp. Med.">
        <title>Differential requirements for Vav proteins in DAP10- and ITAM-mediated NK cell cytotoxicity.</title>
        <authorList>
            <person name="Cella M."/>
            <person name="Fujikawa K."/>
            <person name="Tassi I."/>
            <person name="Kim S."/>
            <person name="Latinis K."/>
            <person name="Nishi S."/>
            <person name="Yokoyama W."/>
            <person name="Colonna M."/>
            <person name="Swat W."/>
        </authorList>
    </citation>
    <scope>FUNCTION</scope>
</reference>
<reference key="9">
    <citation type="journal article" date="2004" name="J. Immunol.">
        <title>A Structural basis for the association of DAP12 with mouse, but not human, NKG2D.</title>
        <authorList>
            <person name="Rosen D.B."/>
            <person name="Araki M."/>
            <person name="Hamerman J.A."/>
            <person name="Chen T."/>
            <person name="Yamamura T."/>
            <person name="Lanier L.L."/>
        </authorList>
    </citation>
    <scope>INTERACTION WITH KLRK1</scope>
</reference>
<reference key="10">
    <citation type="journal article" date="2005" name="Nat. Immunol.">
        <title>Function of NKG2D in natural killer cell-mediated rejection of mouse bone marrow grafts.</title>
        <authorList>
            <person name="Ogasawara K."/>
            <person name="Benjamin J."/>
            <person name="Takaki R."/>
            <person name="Phillips J.H."/>
            <person name="Lanier L.L."/>
        </authorList>
    </citation>
    <scope>FUNCTION</scope>
</reference>
<reference key="11">
    <citation type="journal article" date="2006" name="Immunol. Rev.">
        <title>Physiological roles of murine DAP10 adapter protein in tumor immunity and autoimmunity.</title>
        <authorList>
            <person name="Hyka-Nouspikel N."/>
            <person name="Phillips J.H."/>
        </authorList>
    </citation>
    <scope>FUNCTION</scope>
    <scope>SUBCELLULAR LOCATION</scope>
    <scope>DISRUPTION PHENOTYPE</scope>
</reference>
<reference key="12">
    <citation type="journal article" date="2006" name="J. Immunol.">
        <title>Vav1 controls DAP10-mediated natural cytotoxicity by regulating actin and microtubule dynamics.</title>
        <authorList>
            <person name="Graham D.B."/>
            <person name="Cella M."/>
            <person name="Giurisato E."/>
            <person name="Fujikawa K."/>
            <person name="Miletic A.V."/>
            <person name="Kloeppel T."/>
            <person name="Brim K."/>
            <person name="Takai T."/>
            <person name="Shaw A.S."/>
            <person name="Colonna M."/>
            <person name="Swat W."/>
        </authorList>
    </citation>
    <scope>FUNCTION</scope>
    <scope>INTERACTION WITH GRB2-VAV1</scope>
</reference>
<reference key="13">
    <citation type="journal article" date="2007" name="J. Immunol.">
        <title>DAP10 deficiency breaks the immune tolerance against transplantable syngeneic melanoma.</title>
        <authorList>
            <person name="Hyka-Nouspikel N."/>
            <person name="Lucian L."/>
            <person name="Murphy E."/>
            <person name="McClanahan T."/>
            <person name="Phillips J.H."/>
        </authorList>
    </citation>
    <scope>DISRUPTION PHENOTYPE</scope>
</reference>
<reference key="14">
    <citation type="journal article" date="2009" name="Proc. Natl. Acad. Sci. U.S.A.">
        <title>Signal adaptor DAP10 associates with MDL-1 and triggers osteoclastogenesis in cooperation with DAP12.</title>
        <authorList>
            <person name="Inui M."/>
            <person name="Kikuchi Y."/>
            <person name="Aoki N."/>
            <person name="Endo S."/>
            <person name="Maeda T."/>
            <person name="Sugahara-Tobinai A."/>
            <person name="Fujimura S."/>
            <person name="Nakamura A."/>
            <person name="Kumanogoh A."/>
            <person name="Colonna M."/>
            <person name="Takai T."/>
        </authorList>
    </citation>
    <scope>INTERACTION WITH CLEC5A</scope>
</reference>
<name>HCST_MOUSE</name>
<comment type="function">
    <text evidence="4 6 8 9 10 11">Transmembrane adapter protein which associates with KLRK1 to form an activation receptor KLRK1-HCST in lymphoid and myeloid cells; this receptor plays a major role in triggering cytotoxicity against target cells expressing cell surface ligands such as MHC class I chain-related MICA and MICB, and UL16-binding proteins (ULBPs); these ligands are up-regulated by stress conditions and pathological state such as viral infection and tumor transformation. Functions as a docking site for PI3-kinase PIK3R1 and GRB2. Interaction of ULBPs with KLRK1-HCST triggers calcium mobilization and activation of the PIK3R1, MAP2K/ERK, and JAK2/STAT5 signaling pathways. Both PIK3R1 and GRB2 are required for full KLRK1-HCST-mediated activation and ultimate killing of target cells. In NK cells, KLRK1-HCST signaling directly induces cytotoxicity and enhances cytokine production initiated via DAP12/TYROBP-associated receptors. In T-cells, it provides primarily costimulation for TCR-induced signals. KLRK1-HCST receptor plays a role in immune surveillance against tumors and is required for cytolysis of tumors cells; indeed, melanoma cells that do not express KLRK1 ligands escape from immune surveillance mediated by NK cells.</text>
</comment>
<comment type="subunit">
    <text evidence="1 2 4 6 7 10 13">Homodimer; Disulfide-linked. Interacts with KLRK1 to form a stable complex, which results in surface expression of both proteins, whereas alone, it is minimally expressed. Interacts with PIK3R1 and GRB2. Interacts with CLEC5A (By similarity). Forms an CLEC5A/TYROBP/HCST trimolecular complex depending almost solely on TYROBP. Heterohexamer composed of four subunits of HCST/DAP10 and two subunits of KLRK1. Interacts (via transmembrane domain) with KLRK1 isoform 1 (via transmembrane domain); the interaction is required for KLRK1 cell surface expression on naive NK cells and activated CD8(+) T-cells, but is dispensable on activated TYROBP-expressing NK cells. Interacts (via transmembrane domain) with KLRK1 isoform 2 (via transmembrane domain); the interaction is required for KLRK1 NK cell surface expression and induces NK cell-mediated cytotoxicity. Interacts with CD300H (By similarity).</text>
</comment>
<comment type="interaction">
    <interactant intactId="EBI-15761243">
        <id>Q9QUJ0</id>
    </interactant>
    <interactant intactId="EBI-15761206">
        <id>Q9R007</id>
        <label>Clec5a</label>
    </interactant>
    <organismsDiffer>false</organismsDiffer>
    <experiments>3</experiments>
</comment>
<comment type="interaction">
    <interactant intactId="EBI-15761243">
        <id>Q9QUJ0</id>
    </interactant>
    <interactant intactId="EBI-15687058">
        <id>O54885</id>
        <label>Tyrobp</label>
    </interactant>
    <organismsDiffer>false</organismsDiffer>
    <experiments>4</experiments>
</comment>
<comment type="subcellular location">
    <subcellularLocation>
        <location evidence="11">Membrane</location>
        <topology evidence="11">Single-pass type I membrane protein</topology>
    </subcellularLocation>
</comment>
<comment type="alternative products">
    <event type="alternative splicing"/>
    <isoform>
        <id>Q9QUJ0-1</id>
        <name>1</name>
        <sequence type="displayed"/>
    </isoform>
    <isoform>
        <id>Q9QUJ0-2</id>
        <name>2</name>
        <sequence type="described" ref="VSP_033023"/>
    </isoform>
</comment>
<comment type="PTM">
    <text evidence="4">Phosphorylated; PIK3R1 and GRB2 associate specifically with tyrosine-phosphorylated HCST.</text>
</comment>
<comment type="PTM">
    <text evidence="1">O-glycosylated.</text>
</comment>
<comment type="disruption phenotype">
    <text evidence="5 11 12">Mice exhibit low expression of KLRK1 in NK cells, but no expression in resting T-cells. KLRK1 expression is not induced upon T-cell activation, while it is up-regulated in activated NK cells; NK cells promote KLRK1-mediated tumor rejection due to substitution of HCST by DAP12/TYROBP. Mice lacking HCST exhibit antitumor phenotype; they show enhanced immunity against melanoma malignancies due to hyperactive functioning of a group of T-cells that share properties of both T-cells and NK cells (NKT cells). NKT cells exhibit increased cytokine production and cytotoxicity, leading to efficient killing of melanoma tumors. Upon activation, T regulatory cells (Tregs) maintain higher levels of IL2 and produced significantly lower amounts of IL10 and IFN-gamma cytokines. NKT cells activated by IL2 efficiently lyse B16-melanoma tumors in vitro in an KLRK1-independent way; The hyperactivity of NKT cells in these mice is not related to signaling of KLRK1.</text>
</comment>
<comment type="miscellaneous">
    <text>Immune reactivity to healthy cells that express KLRK1 ligands can happen under physiological conditions; NK cells are able to reject syngeneic bone marrow grafts when the bone marrow cells expressed sufficient KLRK1 ligand.</text>
</comment>
<comment type="similarity">
    <text evidence="16">Belongs to the DAP10 family.</text>
</comment>
<protein>
    <recommendedName>
        <fullName>Hematopoietic cell signal transducer</fullName>
    </recommendedName>
    <alternativeName>
        <fullName>DNAX-activation protein 10</fullName>
    </alternativeName>
    <alternativeName>
        <fullName>Membrane protein DAP10</fullName>
    </alternativeName>
    <alternativeName>
        <fullName>Transmembrane adapter protein KAP10</fullName>
    </alternativeName>
</protein>
<organism>
    <name type="scientific">Mus musculus</name>
    <name type="common">Mouse</name>
    <dbReference type="NCBI Taxonomy" id="10090"/>
    <lineage>
        <taxon>Eukaryota</taxon>
        <taxon>Metazoa</taxon>
        <taxon>Chordata</taxon>
        <taxon>Craniata</taxon>
        <taxon>Vertebrata</taxon>
        <taxon>Euteleostomi</taxon>
        <taxon>Mammalia</taxon>
        <taxon>Eutheria</taxon>
        <taxon>Euarchontoglires</taxon>
        <taxon>Glires</taxon>
        <taxon>Rodentia</taxon>
        <taxon>Myomorpha</taxon>
        <taxon>Muroidea</taxon>
        <taxon>Muridae</taxon>
        <taxon>Murinae</taxon>
        <taxon>Mus</taxon>
        <taxon>Mus</taxon>
    </lineage>
</organism>
<accession>Q9QUJ0</accession>
<accession>Q9R1E7</accession>